<keyword id="KW-0030">Aminoacyl-tRNA synthetase</keyword>
<keyword id="KW-0067">ATP-binding</keyword>
<keyword id="KW-0963">Cytoplasm</keyword>
<keyword id="KW-0436">Ligase</keyword>
<keyword id="KW-0547">Nucleotide-binding</keyword>
<keyword id="KW-0648">Protein biosynthesis</keyword>
<keyword id="KW-0694">RNA-binding</keyword>
<protein>
    <recommendedName>
        <fullName evidence="1">Tyrosine--tRNA ligase</fullName>
        <ecNumber evidence="1">6.1.1.1</ecNumber>
    </recommendedName>
    <alternativeName>
        <fullName evidence="1">Tyrosyl-tRNA synthetase</fullName>
        <shortName evidence="1">TyrRS</shortName>
    </alternativeName>
</protein>
<comment type="function">
    <text evidence="1">Catalyzes the attachment of tyrosine to tRNA(Tyr) in a two-step reaction: tyrosine is first activated by ATP to form Tyr-AMP and then transferred to the acceptor end of tRNA(Tyr).</text>
</comment>
<comment type="catalytic activity">
    <reaction evidence="1">
        <text>tRNA(Tyr) + L-tyrosine + ATP = L-tyrosyl-tRNA(Tyr) + AMP + diphosphate + H(+)</text>
        <dbReference type="Rhea" id="RHEA:10220"/>
        <dbReference type="Rhea" id="RHEA-COMP:9706"/>
        <dbReference type="Rhea" id="RHEA-COMP:9707"/>
        <dbReference type="ChEBI" id="CHEBI:15378"/>
        <dbReference type="ChEBI" id="CHEBI:30616"/>
        <dbReference type="ChEBI" id="CHEBI:33019"/>
        <dbReference type="ChEBI" id="CHEBI:58315"/>
        <dbReference type="ChEBI" id="CHEBI:78442"/>
        <dbReference type="ChEBI" id="CHEBI:78536"/>
        <dbReference type="ChEBI" id="CHEBI:456215"/>
        <dbReference type="EC" id="6.1.1.1"/>
    </reaction>
</comment>
<comment type="subunit">
    <text evidence="1">Homodimer.</text>
</comment>
<comment type="subcellular location">
    <subcellularLocation>
        <location evidence="1">Cytoplasm</location>
    </subcellularLocation>
</comment>
<comment type="similarity">
    <text evidence="1">Belongs to the class-I aminoacyl-tRNA synthetase family. TyrS type 2 subfamily.</text>
</comment>
<proteinExistence type="inferred from homology"/>
<feature type="chain" id="PRO_0000236729" description="Tyrosine--tRNA ligase">
    <location>
        <begin position="1"/>
        <end position="401"/>
    </location>
</feature>
<feature type="domain" description="S4 RNA-binding" evidence="1">
    <location>
        <begin position="336"/>
        <end position="397"/>
    </location>
</feature>
<feature type="short sequence motif" description="'HIGH' region">
    <location>
        <begin position="42"/>
        <end position="51"/>
    </location>
</feature>
<feature type="short sequence motif" description="'KMSKS' region">
    <location>
        <begin position="226"/>
        <end position="230"/>
    </location>
</feature>
<feature type="binding site" evidence="1">
    <location>
        <position position="229"/>
    </location>
    <ligand>
        <name>ATP</name>
        <dbReference type="ChEBI" id="CHEBI:30616"/>
    </ligand>
</feature>
<accession>Q5X7H7</accession>
<reference key="1">
    <citation type="journal article" date="2004" name="Nat. Genet.">
        <title>Evidence in the Legionella pneumophila genome for exploitation of host cell functions and high genome plasticity.</title>
        <authorList>
            <person name="Cazalet C."/>
            <person name="Rusniok C."/>
            <person name="Brueggemann H."/>
            <person name="Zidane N."/>
            <person name="Magnier A."/>
            <person name="Ma L."/>
            <person name="Tichit M."/>
            <person name="Jarraud S."/>
            <person name="Bouchier C."/>
            <person name="Vandenesch F."/>
            <person name="Kunst F."/>
            <person name="Etienne J."/>
            <person name="Glaser P."/>
            <person name="Buchrieser C."/>
        </authorList>
    </citation>
    <scope>NUCLEOTIDE SEQUENCE [LARGE SCALE GENOMIC DNA]</scope>
    <source>
        <strain>Paris</strain>
    </source>
</reference>
<gene>
    <name evidence="1" type="primary">tyrS</name>
    <name type="ordered locus">lpp0628</name>
</gene>
<organism>
    <name type="scientific">Legionella pneumophila (strain Paris)</name>
    <dbReference type="NCBI Taxonomy" id="297246"/>
    <lineage>
        <taxon>Bacteria</taxon>
        <taxon>Pseudomonadati</taxon>
        <taxon>Pseudomonadota</taxon>
        <taxon>Gammaproteobacteria</taxon>
        <taxon>Legionellales</taxon>
        <taxon>Legionellaceae</taxon>
        <taxon>Legionella</taxon>
    </lineage>
</organism>
<dbReference type="EC" id="6.1.1.1" evidence="1"/>
<dbReference type="EMBL" id="CR628336">
    <property type="protein sequence ID" value="CAH11776.1"/>
    <property type="molecule type" value="Genomic_DNA"/>
</dbReference>
<dbReference type="RefSeq" id="WP_011213187.1">
    <property type="nucleotide sequence ID" value="NC_006368.1"/>
</dbReference>
<dbReference type="SMR" id="Q5X7H7"/>
<dbReference type="KEGG" id="lpp:lpp0628"/>
<dbReference type="LegioList" id="lpp0628"/>
<dbReference type="HOGENOM" id="CLU_024003_5_0_6"/>
<dbReference type="GO" id="GO:0005829">
    <property type="term" value="C:cytosol"/>
    <property type="evidence" value="ECO:0007669"/>
    <property type="project" value="TreeGrafter"/>
</dbReference>
<dbReference type="GO" id="GO:0005524">
    <property type="term" value="F:ATP binding"/>
    <property type="evidence" value="ECO:0007669"/>
    <property type="project" value="UniProtKB-UniRule"/>
</dbReference>
<dbReference type="GO" id="GO:0003723">
    <property type="term" value="F:RNA binding"/>
    <property type="evidence" value="ECO:0007669"/>
    <property type="project" value="UniProtKB-KW"/>
</dbReference>
<dbReference type="GO" id="GO:0004831">
    <property type="term" value="F:tyrosine-tRNA ligase activity"/>
    <property type="evidence" value="ECO:0007669"/>
    <property type="project" value="UniProtKB-UniRule"/>
</dbReference>
<dbReference type="GO" id="GO:0006437">
    <property type="term" value="P:tyrosyl-tRNA aminoacylation"/>
    <property type="evidence" value="ECO:0007669"/>
    <property type="project" value="UniProtKB-UniRule"/>
</dbReference>
<dbReference type="CDD" id="cd00165">
    <property type="entry name" value="S4"/>
    <property type="match status" value="1"/>
</dbReference>
<dbReference type="CDD" id="cd00805">
    <property type="entry name" value="TyrRS_core"/>
    <property type="match status" value="1"/>
</dbReference>
<dbReference type="FunFam" id="1.10.240.10:FF:000006">
    <property type="entry name" value="Tyrosine--tRNA ligase"/>
    <property type="match status" value="1"/>
</dbReference>
<dbReference type="FunFam" id="3.40.50.620:FF:000061">
    <property type="entry name" value="Tyrosine--tRNA ligase"/>
    <property type="match status" value="1"/>
</dbReference>
<dbReference type="Gene3D" id="3.40.50.620">
    <property type="entry name" value="HUPs"/>
    <property type="match status" value="1"/>
</dbReference>
<dbReference type="Gene3D" id="3.10.290.10">
    <property type="entry name" value="RNA-binding S4 domain"/>
    <property type="match status" value="1"/>
</dbReference>
<dbReference type="Gene3D" id="1.10.240.10">
    <property type="entry name" value="Tyrosyl-Transfer RNA Synthetase"/>
    <property type="match status" value="1"/>
</dbReference>
<dbReference type="HAMAP" id="MF_02007">
    <property type="entry name" value="Tyr_tRNA_synth_type2"/>
    <property type="match status" value="1"/>
</dbReference>
<dbReference type="InterPro" id="IPR001412">
    <property type="entry name" value="aa-tRNA-synth_I_CS"/>
</dbReference>
<dbReference type="InterPro" id="IPR002305">
    <property type="entry name" value="aa-tRNA-synth_Ic"/>
</dbReference>
<dbReference type="InterPro" id="IPR014729">
    <property type="entry name" value="Rossmann-like_a/b/a_fold"/>
</dbReference>
<dbReference type="InterPro" id="IPR002942">
    <property type="entry name" value="S4_RNA-bd"/>
</dbReference>
<dbReference type="InterPro" id="IPR036986">
    <property type="entry name" value="S4_RNA-bd_sf"/>
</dbReference>
<dbReference type="InterPro" id="IPR002307">
    <property type="entry name" value="Tyr-tRNA-ligase"/>
</dbReference>
<dbReference type="InterPro" id="IPR024088">
    <property type="entry name" value="Tyr-tRNA-ligase_bac-type"/>
</dbReference>
<dbReference type="InterPro" id="IPR024108">
    <property type="entry name" value="Tyr-tRNA-ligase_bac_2"/>
</dbReference>
<dbReference type="NCBIfam" id="TIGR00234">
    <property type="entry name" value="tyrS"/>
    <property type="match status" value="1"/>
</dbReference>
<dbReference type="PANTHER" id="PTHR11766:SF1">
    <property type="entry name" value="TYROSINE--TRNA LIGASE"/>
    <property type="match status" value="1"/>
</dbReference>
<dbReference type="PANTHER" id="PTHR11766">
    <property type="entry name" value="TYROSYL-TRNA SYNTHETASE"/>
    <property type="match status" value="1"/>
</dbReference>
<dbReference type="Pfam" id="PF00579">
    <property type="entry name" value="tRNA-synt_1b"/>
    <property type="match status" value="1"/>
</dbReference>
<dbReference type="PRINTS" id="PR01040">
    <property type="entry name" value="TRNASYNTHTYR"/>
</dbReference>
<dbReference type="SMART" id="SM00363">
    <property type="entry name" value="S4"/>
    <property type="match status" value="1"/>
</dbReference>
<dbReference type="SUPFAM" id="SSF55174">
    <property type="entry name" value="Alpha-L RNA-binding motif"/>
    <property type="match status" value="1"/>
</dbReference>
<dbReference type="SUPFAM" id="SSF52374">
    <property type="entry name" value="Nucleotidylyl transferase"/>
    <property type="match status" value="1"/>
</dbReference>
<dbReference type="PROSITE" id="PS00178">
    <property type="entry name" value="AA_TRNA_LIGASE_I"/>
    <property type="match status" value="1"/>
</dbReference>
<dbReference type="PROSITE" id="PS50889">
    <property type="entry name" value="S4"/>
    <property type="match status" value="1"/>
</dbReference>
<sequence>MIVQDSVCSELMRGCEEILPVPELEKKLQKGIPLKIKAGFDPTAPDLHLGHTVLLNKLRQFQQFGHEVIFLIGDFTAMIGDPTGKNVTRMPLSQETVLENAKTYQHQVFKILDPDKTTVAFNSQWLNKFNAVDLIRLAATHTVARMLERDDFNKRYTTGQPIAIHEFLYPLLQGYDSVALKADVELGGTDQKFNLLMGRELQKHYGFEPQVVMMTPLIEGLDGVKKMSKSLDNYIGINETPEQIFGKIMSVSDELMWRYIDLLSFKTGKEIQQLKQSVLEGKNPRDVKIDFAKEIVARFHDQTQAELAHNNFIERFQKGNIPEDLEELSLVIVEPIALAQLLKQIDLTASTSESIRMVKQGAVKVDGDKISDPSLKLPIGKSYIIQVGKRRIAKLSIQQAD</sequence>
<name>SYY_LEGPA</name>
<evidence type="ECO:0000255" key="1">
    <source>
        <dbReference type="HAMAP-Rule" id="MF_02007"/>
    </source>
</evidence>